<protein>
    <recommendedName>
        <fullName>Cryptochrome-2</fullName>
    </recommendedName>
</protein>
<feature type="chain" id="PRO_0000261151" description="Cryptochrome-2">
    <location>
        <begin position="1"/>
        <end position="582"/>
    </location>
</feature>
<feature type="domain" description="Photolyase/cryptochrome alpha/beta">
    <location>
        <begin position="12"/>
        <end position="141"/>
    </location>
</feature>
<feature type="region of interest" description="Disordered" evidence="4">
    <location>
        <begin position="521"/>
        <end position="559"/>
    </location>
</feature>
<feature type="compositionally biased region" description="Polar residues" evidence="4">
    <location>
        <begin position="527"/>
        <end position="546"/>
    </location>
</feature>
<feature type="binding site" evidence="3">
    <location>
        <position position="261"/>
    </location>
    <ligand>
        <name>FAD</name>
        <dbReference type="ChEBI" id="CHEBI:57692"/>
    </ligand>
</feature>
<feature type="binding site" evidence="2">
    <location>
        <position position="298"/>
    </location>
    <ligand>
        <name>FAD</name>
        <dbReference type="ChEBI" id="CHEBI:57692"/>
    </ligand>
</feature>
<feature type="binding site" evidence="3">
    <location>
        <position position="364"/>
    </location>
    <ligand>
        <name>FAD</name>
        <dbReference type="ChEBI" id="CHEBI:57692"/>
    </ligand>
</feature>
<feature type="binding site" evidence="3">
    <location>
        <begin position="396"/>
        <end position="398"/>
    </location>
    <ligand>
        <name>FAD</name>
        <dbReference type="ChEBI" id="CHEBI:57692"/>
    </ligand>
</feature>
<feature type="sequence conflict" description="In Ref. 1; AAK61386." evidence="6" ref="1">
    <original>A</original>
    <variation>T</variation>
    <location>
        <position position="106"/>
    </location>
</feature>
<feature type="sequence conflict" description="In Ref. 1; AAK61386." evidence="6" ref="1">
    <original>N</original>
    <variation>D</variation>
    <location>
        <position position="143"/>
    </location>
</feature>
<keyword id="KW-0090">Biological rhythms</keyword>
<keyword id="KW-0157">Chromophore</keyword>
<keyword id="KW-0963">Cytoplasm</keyword>
<keyword id="KW-0274">FAD</keyword>
<keyword id="KW-0285">Flavoprotein</keyword>
<keyword id="KW-0547">Nucleotide-binding</keyword>
<keyword id="KW-0539">Nucleus</keyword>
<keyword id="KW-0600">Photoreceptor protein</keyword>
<keyword id="KW-0675">Receptor</keyword>
<keyword id="KW-1185">Reference proteome</keyword>
<keyword id="KW-0678">Repressor</keyword>
<keyword id="KW-0716">Sensory transduction</keyword>
<keyword id="KW-0804">Transcription</keyword>
<keyword id="KW-0805">Transcription regulation</keyword>
<reference key="1">
    <citation type="journal article" date="2001" name="Neurosci. Lett.">
        <title>Chicken pineal Cry genes: light-dependent up-regulation of cCry1 and cCry2 transcripts.</title>
        <authorList>
            <person name="Yamamoto K."/>
            <person name="Okano T."/>
            <person name="Fukada Y."/>
        </authorList>
    </citation>
    <scope>NUCLEOTIDE SEQUENCE [MRNA]</scope>
    <scope>FUNCTION</scope>
    <scope>TISSUE SPECIFICITY</scope>
    <scope>INDUCTION</scope>
    <source>
        <tissue>Pineal gland</tissue>
    </source>
</reference>
<reference key="2">
    <citation type="journal article" date="2002" name="FEBS Lett.">
        <title>Chickens' Cry2: molecular analysis of an avian cryptochrome in retinal and pineal photoreceptors.</title>
        <authorList>
            <person name="Bailey M.J."/>
            <person name="Chong N.W."/>
            <person name="Xiong J."/>
            <person name="Cassone V.M."/>
        </authorList>
    </citation>
    <scope>NUCLEOTIDE SEQUENCE [GENOMIC DNA] OF 52-582</scope>
    <scope>NUCLEOTIDE SEQUENCE [MRNA] OF 317-582</scope>
</reference>
<organism>
    <name type="scientific">Gallus gallus</name>
    <name type="common">Chicken</name>
    <dbReference type="NCBI Taxonomy" id="9031"/>
    <lineage>
        <taxon>Eukaryota</taxon>
        <taxon>Metazoa</taxon>
        <taxon>Chordata</taxon>
        <taxon>Craniata</taxon>
        <taxon>Vertebrata</taxon>
        <taxon>Euteleostomi</taxon>
        <taxon>Archelosauria</taxon>
        <taxon>Archosauria</taxon>
        <taxon>Dinosauria</taxon>
        <taxon>Saurischia</taxon>
        <taxon>Theropoda</taxon>
        <taxon>Coelurosauria</taxon>
        <taxon>Aves</taxon>
        <taxon>Neognathae</taxon>
        <taxon>Galloanserae</taxon>
        <taxon>Galliformes</taxon>
        <taxon>Phasianidae</taxon>
        <taxon>Phasianinae</taxon>
        <taxon>Gallus</taxon>
    </lineage>
</organism>
<name>CRY2_CHICK</name>
<dbReference type="EMBL" id="AY034433">
    <property type="protein sequence ID" value="AAK61386.1"/>
    <property type="molecule type" value="mRNA"/>
</dbReference>
<dbReference type="EMBL" id="AY046568">
    <property type="protein sequence ID" value="AAL46564.1"/>
    <property type="molecule type" value="Genomic_DNA"/>
</dbReference>
<dbReference type="EMBL" id="AF251344">
    <property type="protein sequence ID" value="AAM19303.1"/>
    <property type="molecule type" value="mRNA"/>
</dbReference>
<dbReference type="RefSeq" id="NP_989575.1">
    <property type="nucleotide sequence ID" value="NM_204244.1"/>
</dbReference>
<dbReference type="SMR" id="Q8QG60"/>
<dbReference type="FunCoup" id="Q8QG60">
    <property type="interactions" value="202"/>
</dbReference>
<dbReference type="STRING" id="9031.ENSGALP00000013730"/>
<dbReference type="PaxDb" id="9031-ENSGALP00000013730"/>
<dbReference type="GeneID" id="374092"/>
<dbReference type="KEGG" id="gga:374092"/>
<dbReference type="CTD" id="1408"/>
<dbReference type="VEuPathDB" id="HostDB:geneid_374092"/>
<dbReference type="eggNOG" id="KOG0133">
    <property type="taxonomic scope" value="Eukaryota"/>
</dbReference>
<dbReference type="InParanoid" id="Q8QG60"/>
<dbReference type="OrthoDB" id="435881at2759"/>
<dbReference type="PhylomeDB" id="Q8QG60"/>
<dbReference type="PRO" id="PR:Q8QG60"/>
<dbReference type="Proteomes" id="UP000000539">
    <property type="component" value="Unassembled WGS sequence"/>
</dbReference>
<dbReference type="GO" id="GO:0005737">
    <property type="term" value="C:cytoplasm"/>
    <property type="evidence" value="ECO:0000318"/>
    <property type="project" value="GO_Central"/>
</dbReference>
<dbReference type="GO" id="GO:0005634">
    <property type="term" value="C:nucleus"/>
    <property type="evidence" value="ECO:0000250"/>
    <property type="project" value="UniProtKB"/>
</dbReference>
<dbReference type="GO" id="GO:0003677">
    <property type="term" value="F:DNA binding"/>
    <property type="evidence" value="ECO:0000318"/>
    <property type="project" value="GO_Central"/>
</dbReference>
<dbReference type="GO" id="GO:0071949">
    <property type="term" value="F:FAD binding"/>
    <property type="evidence" value="ECO:0000250"/>
    <property type="project" value="UniProtKB"/>
</dbReference>
<dbReference type="GO" id="GO:0009881">
    <property type="term" value="F:photoreceptor activity"/>
    <property type="evidence" value="ECO:0007669"/>
    <property type="project" value="UniProtKB-KW"/>
</dbReference>
<dbReference type="GO" id="GO:0032922">
    <property type="term" value="P:circadian regulation of gene expression"/>
    <property type="evidence" value="ECO:0000250"/>
    <property type="project" value="UniProtKB"/>
</dbReference>
<dbReference type="GO" id="GO:0007623">
    <property type="term" value="P:circadian rhythm"/>
    <property type="evidence" value="ECO:0000250"/>
    <property type="project" value="UniProtKB"/>
</dbReference>
<dbReference type="GO" id="GO:0043153">
    <property type="term" value="P:entrainment of circadian clock by photoperiod"/>
    <property type="evidence" value="ECO:0000250"/>
    <property type="project" value="UniProtKB"/>
</dbReference>
<dbReference type="GO" id="GO:0042754">
    <property type="term" value="P:negative regulation of circadian rhythm"/>
    <property type="evidence" value="ECO:0000250"/>
    <property type="project" value="UniProtKB"/>
</dbReference>
<dbReference type="GO" id="GO:0045892">
    <property type="term" value="P:negative regulation of DNA-templated transcription"/>
    <property type="evidence" value="ECO:0000250"/>
    <property type="project" value="UniProtKB"/>
</dbReference>
<dbReference type="GO" id="GO:0042752">
    <property type="term" value="P:regulation of circadian rhythm"/>
    <property type="evidence" value="ECO:0000250"/>
    <property type="project" value="UniProtKB"/>
</dbReference>
<dbReference type="GO" id="GO:0009416">
    <property type="term" value="P:response to light stimulus"/>
    <property type="evidence" value="ECO:0000250"/>
    <property type="project" value="UniProtKB"/>
</dbReference>
<dbReference type="FunFam" id="1.10.579.10:FF:000001">
    <property type="entry name" value="Cryptochrome 1"/>
    <property type="match status" value="1"/>
</dbReference>
<dbReference type="FunFam" id="1.25.40.80:FF:000001">
    <property type="entry name" value="Cryptochrome circadian regulator 2"/>
    <property type="match status" value="1"/>
</dbReference>
<dbReference type="FunFam" id="1.25.40.80:FF:000003">
    <property type="entry name" value="cryptochrome-1 isoform X1"/>
    <property type="match status" value="1"/>
</dbReference>
<dbReference type="Gene3D" id="1.25.40.80">
    <property type="match status" value="1"/>
</dbReference>
<dbReference type="Gene3D" id="1.10.579.10">
    <property type="entry name" value="DNA Cyclobutane Dipyrimidine Photolyase, subunit A, domain 3"/>
    <property type="match status" value="1"/>
</dbReference>
<dbReference type="Gene3D" id="3.40.50.620">
    <property type="entry name" value="HUPs"/>
    <property type="match status" value="1"/>
</dbReference>
<dbReference type="InterPro" id="IPR036134">
    <property type="entry name" value="Crypto/Photolyase_FAD-like_sf"/>
</dbReference>
<dbReference type="InterPro" id="IPR036155">
    <property type="entry name" value="Crypto/Photolyase_N_sf"/>
</dbReference>
<dbReference type="InterPro" id="IPR005101">
    <property type="entry name" value="Cryptochr/Photolyase_FAD-bd"/>
</dbReference>
<dbReference type="InterPro" id="IPR002081">
    <property type="entry name" value="Cryptochrome/DNA_photolyase_1"/>
</dbReference>
<dbReference type="InterPro" id="IPR006050">
    <property type="entry name" value="DNA_photolyase_N"/>
</dbReference>
<dbReference type="InterPro" id="IPR014729">
    <property type="entry name" value="Rossmann-like_a/b/a_fold"/>
</dbReference>
<dbReference type="PANTHER" id="PTHR11455">
    <property type="entry name" value="CRYPTOCHROME"/>
    <property type="match status" value="1"/>
</dbReference>
<dbReference type="PANTHER" id="PTHR11455:SF15">
    <property type="entry name" value="CRYPTOCHROME-2"/>
    <property type="match status" value="1"/>
</dbReference>
<dbReference type="Pfam" id="PF00875">
    <property type="entry name" value="DNA_photolyase"/>
    <property type="match status" value="1"/>
</dbReference>
<dbReference type="Pfam" id="PF03441">
    <property type="entry name" value="FAD_binding_7"/>
    <property type="match status" value="1"/>
</dbReference>
<dbReference type="SUPFAM" id="SSF48173">
    <property type="entry name" value="Cryptochrome/photolyase FAD-binding domain"/>
    <property type="match status" value="1"/>
</dbReference>
<dbReference type="SUPFAM" id="SSF52425">
    <property type="entry name" value="Cryptochrome/photolyase, N-terminal domain"/>
    <property type="match status" value="1"/>
</dbReference>
<dbReference type="PROSITE" id="PS51645">
    <property type="entry name" value="PHR_CRY_ALPHA_BETA"/>
    <property type="match status" value="1"/>
</dbReference>
<accession>Q8QG60</accession>
<accession>Q8QG52</accession>
<accession>Q8QGQ5</accession>
<sequence length="582" mass="66097">MAAAASPPRGFCRSVHWFRRGLRLHDNPALQAALRGAASLRCIYILDPWFAASSAVGINRWRFLLQSLEDLDNSLRKLNSRLFVVRGQPTDVFPRLFKEWGVTRLAFEYDSEPFGKERDAAIIKLAKEAGVEVVIENSHTLYNLDRIIELNGNKPPLTYKRFQAIISRMELPKKPVSSIVSQQMETCKVDIQENHDDVYGVPSLEELGFPTDGLAPAVWQGGETEALARLDKHLERKAWVANYERPRMNANSLLASPTGLSPYLRFGCLSCRLFYYRLWELYKKVKRNSTPPLSLYGQLLWREFFYTAATNNPKFDRMEGNPICIQIPWDKNPEALAKWAEGKTGFPWIDAIMTQLRQEGWIHHLARHAVACFLTRGDLWISWESGVRVFDELLLDADFSVNAGSWMWLSCSAFFQQFFHCYCPVGFGRRTDPSGDYVKRYLPKLKGFPSRYIYEPWNAPESVQKAAKCIIGVDYPKPMVNHAETSRLNIERMKQIYQQLSRYRGLCLLASVPSCVEDLSGPVTDSAPGQGSSTSTAVRLPQSDQASPKRKHEGAEELCTEELYKRAKVTGLPAPEIPGKSS</sequence>
<evidence type="ECO:0000250" key="1"/>
<evidence type="ECO:0000250" key="2">
    <source>
        <dbReference type="UniProtKB" id="P97784"/>
    </source>
</evidence>
<evidence type="ECO:0000250" key="3">
    <source>
        <dbReference type="UniProtKB" id="Q9R194"/>
    </source>
</evidence>
<evidence type="ECO:0000256" key="4">
    <source>
        <dbReference type="SAM" id="MobiDB-lite"/>
    </source>
</evidence>
<evidence type="ECO:0000269" key="5">
    <source>
    </source>
</evidence>
<evidence type="ECO:0000305" key="6"/>
<proteinExistence type="evidence at transcript level"/>
<gene>
    <name type="primary">CRY2</name>
</gene>
<comment type="function">
    <text evidence="3 5">Transcriptional repressor which forms a core component of the circadian clock. The circadian clock, an internal time-keeping system, regulates various physiological processes through the generation of approximately 24 hour circadian rhythms in gene expression, which are translated into rhythms in metabolism and behavior. It is derived from the Latin roots 'circa' (about) and 'diem' (day) and acts as an important regulator of a wide array of physiological functions including metabolism, sleep, body temperature, blood pressure, endocrine, immune, cardiovascular, and renal function. Consists of two major components: the central clock, residing in the suprachiasmatic nucleus (SCN) of the brain, and the peripheral clocks that are present in nearly every tissue and organ system. Both the central and peripheral clocks can be reset by environmental cues, also known as Zeitgebers (German for 'timegivers'). The predominant Zeitgeber for the central clock is light, which is sensed by retina and signals directly to the SCN. The central clock entrains the peripheral clocks through neuronal and hormonal signals, body temperature and feeding-related cues, aligning all clocks with the external light/dark cycle. Circadian rhythms allow an organism to achieve temporal homeostasis with its environment at the molecular level by regulating gene expression to create a peak of protein expression once every 24 hours to control when a particular physiological process is most active with respect to the solar day. Transcription and translation of core clock components (CLOCK, NPAS2, BMAL1, BMAL2, PER1, PER2, PER3, CRY1 and CRY2) plays a critical role in rhythm generation, whereas delays imposed by post-translational modifications (PTMs) are important for determining the period (tau) of the rhythms (tau refers to the period of a rhythm and is the length, in time, of one complete cycle). A diurnal rhythm is synchronized with the day/night cycle, while the ultradian and infradian rhythms have a period shorter and longer than 24 hours, respectively. Disruptions in the circadian rhythms contribute to the pathology of cardiovascular diseases, cancer, metabolic syndromes and aging. A transcription/translation feedback loop (TTFL) forms the core of the molecular circadian clock mechanism. Transcription factors, CLOCK or NPAS2 and BMAL1 or BMAL2, form the positive limb of the feedback loop, act in the form of a heterodimer and activate the transcription of core clock genes and clock-controlled genes (involved in key metabolic processes), harboring E-box elements (5'-CACGTG-3') within their promoters. The core clock genes: PER1/2/3 and CRY1/2 which are transcriptional repressors form the negative limb of the feedback loop and interact with the CLOCK|NPAS2-BMAL1|BMAL2 heterodimer inhibiting its activity and thereby negatively regulating their own expression. This heterodimer also activates nuclear receptors NR1D1/2, RORA/B/G, which form a second feedback loop and which activate and repress BMAL1 transcription, respectively. CRY1 and CRY2 have redundant functions but also differential and selective contributions at least in defining the pace of the SCN circadian clock and its circadian transcriptional outputs. Less potent transcriptional repressor in cerebellum and liver than CRY1, though less effective in lengthening the period of the SCN oscillator. Seems to play a critical role in tuning SCN circadian period by opposing the action of CRY1. With CRY1, dispensable for circadian rhythm generation but necessary for the development of intercellular networks for rhythm synchrony (By similarity). Represses CLOCK-BMAL1-mediated transcriptional activation (PubMed:11684328).</text>
</comment>
<comment type="cofactor">
    <cofactor evidence="3">
        <name>FAD</name>
        <dbReference type="ChEBI" id="CHEBI:57692"/>
    </cofactor>
    <text evidence="3">Binds 1 FAD per subunit.</text>
</comment>
<comment type="cofactor">
    <cofactor evidence="1">
        <name>(6R)-5,10-methylene-5,6,7,8-tetrahydrofolate</name>
        <dbReference type="ChEBI" id="CHEBI:15636"/>
    </cofactor>
    <text evidence="1">Binds 1 5,10-methenyltetrahydrofolate (MTHF) non-covalently per subunit.</text>
</comment>
<comment type="subunit">
    <text evidence="3">Component of the circadian core oscillator, which includes the CRY proteins, CLOCK or NPAS2, BMAL1 or BMAL2, CSNK1E, and the PER proteins.</text>
</comment>
<comment type="subcellular location">
    <subcellularLocation>
        <location evidence="3">Cytoplasm</location>
    </subcellularLocation>
    <subcellularLocation>
        <location evidence="3">Nucleus</location>
    </subcellularLocation>
</comment>
<comment type="tissue specificity">
    <text evidence="5">Expressed in the pineal gland.</text>
</comment>
<comment type="induction">
    <text evidence="5">Exhibits some circadian rhythm expression. Levels increase slightly during subjective day peaking at 10 hours. Levels decrease between 14 hours and 18 hours to peak again at 20 hours-22 hours.</text>
</comment>
<comment type="similarity">
    <text evidence="6">Belongs to the DNA photolyase class-1 family.</text>
</comment>